<sequence length="764" mass="82997">MVYNEKNGGGIPPVPLSLNTATPWQNVNLHNDQQTEPQLKSHPDTDPRITPYLGLRARLSQLWFNRWTILLILVLIRVIILTANLKENLGDAKAKALSACTKVEDVGSAMASMPYYMSKGVNVMAAGSMQKAVEAMASVLKMILTGVQAIIMFVINMYIGTFACLVAAFIHGGLHVATAVVEGATKVMNDAISSITKGITDDMKSFQSAIDKARDFINSGIGLISKDIQLPTINIDSHIRDLQGIKINANGVVNGLDVLDQKIPTFDEAKNLTESALAIPFNLVKGKIDTAFSEFTIEPTIFPTAEKQALSFCSNNSFLNDFFESLITLVYKAKIAFLVVIIILALLAIFVMGYIEYRGFKRERERAARMDANAFNSQDAIYIASRRWTADGGMRLAKWWTKDTDSKNYLLIRWAFAYATSLPALFVLSLAVAGMLSCLFQWVLLRQIEKKAPELAAQVGDFAGDVVGTLKQVSNNWANSSNAVVANMESDINSDLFGWVREATESVNNTLTVLDDQIDHALVAVFNGTVLLDTARDVVGCLIGRKIDAVQDGLTWVHDHAKVTLPRFDDDIFSAGAAQSMGSDGDLSSFLAKPGAVTTDEINEAVGKVIRSLRNGVIQEALITLGLFLTYVIVVLIGVMGALIGWATPGKTRGEGGQQFGGRPPSFHNHNGFDPALAPSNAMVGNPASPHYQNEKFGGGGGMHDVASPAYEEVVYAGRVPVGNTRELITRYPSHQRTSSYPTVESPDPMPHGDEKVPGYFTPI</sequence>
<reference key="1">
    <citation type="journal article" date="2003" name="Nature">
        <title>The genome sequence of the filamentous fungus Neurospora crassa.</title>
        <authorList>
            <person name="Galagan J.E."/>
            <person name="Calvo S.E."/>
            <person name="Borkovich K.A."/>
            <person name="Selker E.U."/>
            <person name="Read N.D."/>
            <person name="Jaffe D.B."/>
            <person name="FitzHugh W."/>
            <person name="Ma L.-J."/>
            <person name="Smirnov S."/>
            <person name="Purcell S."/>
            <person name="Rehman B."/>
            <person name="Elkins T."/>
            <person name="Engels R."/>
            <person name="Wang S."/>
            <person name="Nielsen C.B."/>
            <person name="Butler J."/>
            <person name="Endrizzi M."/>
            <person name="Qui D."/>
            <person name="Ianakiev P."/>
            <person name="Bell-Pedersen D."/>
            <person name="Nelson M.A."/>
            <person name="Werner-Washburne M."/>
            <person name="Selitrennikoff C.P."/>
            <person name="Kinsey J.A."/>
            <person name="Braun E.L."/>
            <person name="Zelter A."/>
            <person name="Schulte U."/>
            <person name="Kothe G.O."/>
            <person name="Jedd G."/>
            <person name="Mewes H.-W."/>
            <person name="Staben C."/>
            <person name="Marcotte E."/>
            <person name="Greenberg D."/>
            <person name="Roy A."/>
            <person name="Foley K."/>
            <person name="Naylor J."/>
            <person name="Stange-Thomann N."/>
            <person name="Barrett R."/>
            <person name="Gnerre S."/>
            <person name="Kamal M."/>
            <person name="Kamvysselis M."/>
            <person name="Mauceli E.W."/>
            <person name="Bielke C."/>
            <person name="Rudd S."/>
            <person name="Frishman D."/>
            <person name="Krystofova S."/>
            <person name="Rasmussen C."/>
            <person name="Metzenberg R.L."/>
            <person name="Perkins D.D."/>
            <person name="Kroken S."/>
            <person name="Cogoni C."/>
            <person name="Macino G."/>
            <person name="Catcheside D.E.A."/>
            <person name="Li W."/>
            <person name="Pratt R.J."/>
            <person name="Osmani S.A."/>
            <person name="DeSouza C.P.C."/>
            <person name="Glass N.L."/>
            <person name="Orbach M.J."/>
            <person name="Berglund J.A."/>
            <person name="Voelker R."/>
            <person name="Yarden O."/>
            <person name="Plamann M."/>
            <person name="Seiler S."/>
            <person name="Dunlap J.C."/>
            <person name="Radford A."/>
            <person name="Aramayo R."/>
            <person name="Natvig D.O."/>
            <person name="Alex L.A."/>
            <person name="Mannhaupt G."/>
            <person name="Ebbole D.J."/>
            <person name="Freitag M."/>
            <person name="Paulsen I."/>
            <person name="Sachs M.S."/>
            <person name="Lander E.S."/>
            <person name="Nusbaum C."/>
            <person name="Birren B.W."/>
        </authorList>
    </citation>
    <scope>NUCLEOTIDE SEQUENCE [LARGE SCALE GENOMIC DNA]</scope>
    <source>
        <strain>ATCC 24698 / 74-OR23-1A / CBS 708.71 / DSM 1257 / FGSC 987</strain>
    </source>
</reference>
<accession>Q7S130</accession>
<comment type="function">
    <text evidence="1">Involved in cell fusion during mating by stabilizing the plasma membrane fusion event.</text>
</comment>
<comment type="subcellular location">
    <subcellularLocation>
        <location evidence="1">Cell membrane</location>
        <topology evidence="1">Multi-pass membrane protein</topology>
    </subcellularLocation>
</comment>
<comment type="similarity">
    <text evidence="4">Belongs to the PRM1 family.</text>
</comment>
<evidence type="ECO:0000250" key="1"/>
<evidence type="ECO:0000255" key="2"/>
<evidence type="ECO:0000256" key="3">
    <source>
        <dbReference type="SAM" id="MobiDB-lite"/>
    </source>
</evidence>
<evidence type="ECO:0000305" key="4"/>
<organism>
    <name type="scientific">Neurospora crassa (strain ATCC 24698 / 74-OR23-1A / CBS 708.71 / DSM 1257 / FGSC 987)</name>
    <dbReference type="NCBI Taxonomy" id="367110"/>
    <lineage>
        <taxon>Eukaryota</taxon>
        <taxon>Fungi</taxon>
        <taxon>Dikarya</taxon>
        <taxon>Ascomycota</taxon>
        <taxon>Pezizomycotina</taxon>
        <taxon>Sordariomycetes</taxon>
        <taxon>Sordariomycetidae</taxon>
        <taxon>Sordariales</taxon>
        <taxon>Sordariaceae</taxon>
        <taxon>Neurospora</taxon>
    </lineage>
</organism>
<feature type="chain" id="PRO_0000337286" description="Plasma membrane fusion protein prm-1">
    <location>
        <begin position="1"/>
        <end position="764"/>
    </location>
</feature>
<feature type="topological domain" description="Extracellular" evidence="1">
    <location>
        <begin position="1"/>
        <end position="61"/>
    </location>
</feature>
<feature type="transmembrane region" description="Helical" evidence="2">
    <location>
        <begin position="62"/>
        <end position="82"/>
    </location>
</feature>
<feature type="topological domain" description="Cytoplasmic" evidence="1">
    <location>
        <begin position="83"/>
        <end position="149"/>
    </location>
</feature>
<feature type="transmembrane region" description="Helical" evidence="2">
    <location>
        <begin position="150"/>
        <end position="170"/>
    </location>
</feature>
<feature type="topological domain" description="Extracellular" evidence="1">
    <location>
        <begin position="171"/>
        <end position="334"/>
    </location>
</feature>
<feature type="transmembrane region" description="Helical" evidence="2">
    <location>
        <begin position="335"/>
        <end position="355"/>
    </location>
</feature>
<feature type="topological domain" description="Cytoplasmic" evidence="1">
    <location>
        <begin position="356"/>
        <end position="424"/>
    </location>
</feature>
<feature type="transmembrane region" description="Helical" evidence="2">
    <location>
        <begin position="425"/>
        <end position="445"/>
    </location>
</feature>
<feature type="topological domain" description="Extracellular" evidence="1">
    <location>
        <begin position="446"/>
        <end position="624"/>
    </location>
</feature>
<feature type="transmembrane region" description="Helical" evidence="2">
    <location>
        <begin position="625"/>
        <end position="645"/>
    </location>
</feature>
<feature type="topological domain" description="Cytoplasmic" evidence="1">
    <location>
        <begin position="646"/>
        <end position="764"/>
    </location>
</feature>
<feature type="region of interest" description="Disordered" evidence="3">
    <location>
        <begin position="653"/>
        <end position="701"/>
    </location>
</feature>
<feature type="region of interest" description="Disordered" evidence="3">
    <location>
        <begin position="735"/>
        <end position="754"/>
    </location>
</feature>
<feature type="glycosylation site" description="N-linked (GlcNAc...) asparagine" evidence="2">
    <location>
        <position position="271"/>
    </location>
</feature>
<feature type="glycosylation site" description="N-linked (GlcNAc...) asparagine" evidence="2">
    <location>
        <position position="315"/>
    </location>
</feature>
<feature type="glycosylation site" description="N-linked (GlcNAc...) asparagine" evidence="2">
    <location>
        <position position="479"/>
    </location>
</feature>
<feature type="glycosylation site" description="N-linked (GlcNAc...) asparagine" evidence="2">
    <location>
        <position position="508"/>
    </location>
</feature>
<feature type="glycosylation site" description="N-linked (GlcNAc...) asparagine" evidence="2">
    <location>
        <position position="527"/>
    </location>
</feature>
<gene>
    <name type="primary">prm-1</name>
    <name type="ORF">NCU09337</name>
</gene>
<name>PRM1_NEUCR</name>
<keyword id="KW-1003">Cell membrane</keyword>
<keyword id="KW-0184">Conjugation</keyword>
<keyword id="KW-0325">Glycoprotein</keyword>
<keyword id="KW-0472">Membrane</keyword>
<keyword id="KW-1185">Reference proteome</keyword>
<keyword id="KW-0812">Transmembrane</keyword>
<keyword id="KW-1133">Transmembrane helix</keyword>
<dbReference type="EMBL" id="CM002237">
    <property type="protein sequence ID" value="EAA29058.1"/>
    <property type="molecule type" value="Genomic_DNA"/>
</dbReference>
<dbReference type="FunCoup" id="Q7S130">
    <property type="interactions" value="17"/>
</dbReference>
<dbReference type="STRING" id="367110.Q7S130"/>
<dbReference type="GlyCosmos" id="Q7S130">
    <property type="glycosylation" value="5 sites, No reported glycans"/>
</dbReference>
<dbReference type="PaxDb" id="5141-EFNCRP00000009097"/>
<dbReference type="EnsemblFungi" id="EAA29058">
    <property type="protein sequence ID" value="EAA29058"/>
    <property type="gene ID" value="NCU09337"/>
</dbReference>
<dbReference type="KEGG" id="ncr:NCU09337"/>
<dbReference type="VEuPathDB" id="FungiDB:NCU09337"/>
<dbReference type="HOGENOM" id="CLU_010191_1_0_1"/>
<dbReference type="InParanoid" id="Q7S130"/>
<dbReference type="OMA" id="NVFGWVN"/>
<dbReference type="OrthoDB" id="5356111at2759"/>
<dbReference type="Proteomes" id="UP000001805">
    <property type="component" value="Chromosome 6, Linkage Group II"/>
</dbReference>
<dbReference type="GO" id="GO:0043332">
    <property type="term" value="C:mating projection tip"/>
    <property type="evidence" value="ECO:0000318"/>
    <property type="project" value="GO_Central"/>
</dbReference>
<dbReference type="GO" id="GO:0005886">
    <property type="term" value="C:plasma membrane"/>
    <property type="evidence" value="ECO:0007669"/>
    <property type="project" value="UniProtKB-SubCell"/>
</dbReference>
<dbReference type="GO" id="GO:0032220">
    <property type="term" value="P:plasma membrane fusion involved in cytogamy"/>
    <property type="evidence" value="ECO:0000318"/>
    <property type="project" value="GO_Central"/>
</dbReference>
<dbReference type="InterPro" id="IPR026777">
    <property type="entry name" value="PRM1"/>
</dbReference>
<dbReference type="PANTHER" id="PTHR31030">
    <property type="entry name" value="PLASMA MEMBRANE FUSION PROTEIN PRM1"/>
    <property type="match status" value="1"/>
</dbReference>
<dbReference type="PANTHER" id="PTHR31030:SF1">
    <property type="entry name" value="PLASMA MEMBRANE FUSION PROTEIN PRM1"/>
    <property type="match status" value="1"/>
</dbReference>
<proteinExistence type="inferred from homology"/>
<protein>
    <recommendedName>
        <fullName>Plasma membrane fusion protein prm-1</fullName>
    </recommendedName>
</protein>